<sequence length="137" mass="15505">MQNPRRTKYRKQHRGRLRGISSRGNVVSFGKYALQALEPAWITARQIEAGRRAITRHARRGGKLWIRIFPDKPITMRPAETRMGSGKGSPEYWVSVIKPGRIIYELGGVSKEVAEAAMLIAAHKMPIQTRLVTSEKL</sequence>
<name>RK16_ADICA</name>
<gene>
    <name evidence="1" type="primary">rpl16</name>
</gene>
<geneLocation type="chloroplast"/>
<feature type="chain" id="PRO_0000062265" description="Large ribosomal subunit protein uL16c">
    <location>
        <begin position="1"/>
        <end position="137"/>
    </location>
</feature>
<reference key="1">
    <citation type="journal article" date="2003" name="DNA Res.">
        <title>Complete nucleotide sequence of the chloroplast genome from a leptosporangiate fern, Adiantum capillus-veneris L.</title>
        <authorList>
            <person name="Wolf P.G."/>
            <person name="Rowe C.A."/>
            <person name="Sinclair R.B."/>
            <person name="Hasebe M."/>
        </authorList>
    </citation>
    <scope>NUCLEOTIDE SEQUENCE [LARGE SCALE GENOMIC DNA]</scope>
</reference>
<reference key="2">
    <citation type="journal article" date="2004" name="Gene">
        <title>High levels of RNA editing in a vascular plant chloroplast genome: analysis of transcripts from the fern Adiantum capillus-veneris.</title>
        <authorList>
            <person name="Wolf P.G."/>
            <person name="Rowe C.A."/>
            <person name="Hasebe M."/>
        </authorList>
    </citation>
    <scope>NUCLEOTIDE SEQUENCE [GENOMIC DNA]</scope>
    <scope>ABSENCE OF RNA EDITING</scope>
    <source>
        <tissue>Frond</tissue>
    </source>
</reference>
<organism>
    <name type="scientific">Adiantum capillus-veneris</name>
    <name type="common">Maidenhair fern</name>
    <dbReference type="NCBI Taxonomy" id="13818"/>
    <lineage>
        <taxon>Eukaryota</taxon>
        <taxon>Viridiplantae</taxon>
        <taxon>Streptophyta</taxon>
        <taxon>Embryophyta</taxon>
        <taxon>Tracheophyta</taxon>
        <taxon>Polypodiopsida</taxon>
        <taxon>Polypodiidae</taxon>
        <taxon>Polypodiales</taxon>
        <taxon>Pteridineae</taxon>
        <taxon>Pteridaceae</taxon>
        <taxon>Vittarioideae</taxon>
        <taxon>Adiantum</taxon>
    </lineage>
</organism>
<evidence type="ECO:0000255" key="1">
    <source>
        <dbReference type="HAMAP-Rule" id="MF_01342"/>
    </source>
</evidence>
<evidence type="ECO:0000305" key="2"/>
<keyword id="KW-0150">Chloroplast</keyword>
<keyword id="KW-0934">Plastid</keyword>
<keyword id="KW-0687">Ribonucleoprotein</keyword>
<keyword id="KW-0689">Ribosomal protein</keyword>
<comment type="subunit">
    <text evidence="1">Part of the 50S ribosomal subunit.</text>
</comment>
<comment type="subcellular location">
    <subcellularLocation>
        <location>Plastid</location>
        <location>Chloroplast</location>
    </subcellularLocation>
</comment>
<comment type="similarity">
    <text evidence="1">Belongs to the universal ribosomal protein uL16 family.</text>
</comment>
<protein>
    <recommendedName>
        <fullName evidence="1">Large ribosomal subunit protein uL16c</fullName>
    </recommendedName>
    <alternativeName>
        <fullName evidence="2">50S ribosomal protein L16, chloroplastic</fullName>
    </alternativeName>
</protein>
<proteinExistence type="evidence at transcript level"/>
<dbReference type="EMBL" id="AY178864">
    <property type="protein sequence ID" value="AAP29428.1"/>
    <property type="molecule type" value="Genomic_DNA"/>
</dbReference>
<dbReference type="RefSeq" id="NP_848097.1">
    <property type="nucleotide sequence ID" value="NC_004766.1"/>
</dbReference>
<dbReference type="SMR" id="Q85FI5"/>
<dbReference type="GeneID" id="807391"/>
<dbReference type="GO" id="GO:0009507">
    <property type="term" value="C:chloroplast"/>
    <property type="evidence" value="ECO:0007669"/>
    <property type="project" value="UniProtKB-SubCell"/>
</dbReference>
<dbReference type="GO" id="GO:0005762">
    <property type="term" value="C:mitochondrial large ribosomal subunit"/>
    <property type="evidence" value="ECO:0007669"/>
    <property type="project" value="TreeGrafter"/>
</dbReference>
<dbReference type="GO" id="GO:0019843">
    <property type="term" value="F:rRNA binding"/>
    <property type="evidence" value="ECO:0007669"/>
    <property type="project" value="InterPro"/>
</dbReference>
<dbReference type="GO" id="GO:0003735">
    <property type="term" value="F:structural constituent of ribosome"/>
    <property type="evidence" value="ECO:0007669"/>
    <property type="project" value="InterPro"/>
</dbReference>
<dbReference type="GO" id="GO:0032543">
    <property type="term" value="P:mitochondrial translation"/>
    <property type="evidence" value="ECO:0007669"/>
    <property type="project" value="TreeGrafter"/>
</dbReference>
<dbReference type="CDD" id="cd01433">
    <property type="entry name" value="Ribosomal_L16_L10e"/>
    <property type="match status" value="1"/>
</dbReference>
<dbReference type="FunFam" id="3.90.1170.10:FF:000001">
    <property type="entry name" value="50S ribosomal protein L16"/>
    <property type="match status" value="1"/>
</dbReference>
<dbReference type="Gene3D" id="3.90.1170.10">
    <property type="entry name" value="Ribosomal protein L10e/L16"/>
    <property type="match status" value="1"/>
</dbReference>
<dbReference type="HAMAP" id="MF_01342">
    <property type="entry name" value="Ribosomal_uL16"/>
    <property type="match status" value="1"/>
</dbReference>
<dbReference type="InterPro" id="IPR047873">
    <property type="entry name" value="Ribosomal_uL16"/>
</dbReference>
<dbReference type="InterPro" id="IPR000114">
    <property type="entry name" value="Ribosomal_uL16_bact-type"/>
</dbReference>
<dbReference type="InterPro" id="IPR020798">
    <property type="entry name" value="Ribosomal_uL16_CS"/>
</dbReference>
<dbReference type="InterPro" id="IPR016180">
    <property type="entry name" value="Ribosomal_uL16_dom"/>
</dbReference>
<dbReference type="InterPro" id="IPR036920">
    <property type="entry name" value="Ribosomal_uL16_sf"/>
</dbReference>
<dbReference type="NCBIfam" id="TIGR01164">
    <property type="entry name" value="rplP_bact"/>
    <property type="match status" value="1"/>
</dbReference>
<dbReference type="PANTHER" id="PTHR12220">
    <property type="entry name" value="50S/60S RIBOSOMAL PROTEIN L16"/>
    <property type="match status" value="1"/>
</dbReference>
<dbReference type="PANTHER" id="PTHR12220:SF13">
    <property type="entry name" value="LARGE RIBOSOMAL SUBUNIT PROTEIN UL16M"/>
    <property type="match status" value="1"/>
</dbReference>
<dbReference type="Pfam" id="PF00252">
    <property type="entry name" value="Ribosomal_L16"/>
    <property type="match status" value="1"/>
</dbReference>
<dbReference type="PRINTS" id="PR00060">
    <property type="entry name" value="RIBOSOMALL16"/>
</dbReference>
<dbReference type="SUPFAM" id="SSF54686">
    <property type="entry name" value="Ribosomal protein L16p/L10e"/>
    <property type="match status" value="1"/>
</dbReference>
<dbReference type="PROSITE" id="PS00586">
    <property type="entry name" value="RIBOSOMAL_L16_1"/>
    <property type="match status" value="1"/>
</dbReference>
<dbReference type="PROSITE" id="PS00701">
    <property type="entry name" value="RIBOSOMAL_L16_2"/>
    <property type="match status" value="1"/>
</dbReference>
<accession>Q85FI5</accession>